<comment type="function">
    <text evidence="1">Catalyzes the transfer of the enolpyruvyl moiety of phosphoenolpyruvate (PEP) to the 5-hydroxyl of shikimate-3-phosphate (S3P) to produce enolpyruvyl shikimate-3-phosphate and inorganic phosphate.</text>
</comment>
<comment type="catalytic activity">
    <reaction evidence="1">
        <text>3-phosphoshikimate + phosphoenolpyruvate = 5-O-(1-carboxyvinyl)-3-phosphoshikimate + phosphate</text>
        <dbReference type="Rhea" id="RHEA:21256"/>
        <dbReference type="ChEBI" id="CHEBI:43474"/>
        <dbReference type="ChEBI" id="CHEBI:57701"/>
        <dbReference type="ChEBI" id="CHEBI:58702"/>
        <dbReference type="ChEBI" id="CHEBI:145989"/>
        <dbReference type="EC" id="2.5.1.19"/>
    </reaction>
    <physiologicalReaction direction="left-to-right" evidence="1">
        <dbReference type="Rhea" id="RHEA:21257"/>
    </physiologicalReaction>
</comment>
<comment type="pathway">
    <text evidence="1">Metabolic intermediate biosynthesis; chorismate biosynthesis; chorismate from D-erythrose 4-phosphate and phosphoenolpyruvate: step 6/7.</text>
</comment>
<comment type="subunit">
    <text evidence="1">Monomer.</text>
</comment>
<comment type="subcellular location">
    <subcellularLocation>
        <location evidence="1">Cytoplasm</location>
    </subcellularLocation>
</comment>
<comment type="similarity">
    <text evidence="1">Belongs to the EPSP synthase family.</text>
</comment>
<name>AROA_SALG2</name>
<organism>
    <name type="scientific">Salmonella gallinarum (strain 287/91 / NCTC 13346)</name>
    <dbReference type="NCBI Taxonomy" id="550538"/>
    <lineage>
        <taxon>Bacteria</taxon>
        <taxon>Pseudomonadati</taxon>
        <taxon>Pseudomonadota</taxon>
        <taxon>Gammaproteobacteria</taxon>
        <taxon>Enterobacterales</taxon>
        <taxon>Enterobacteriaceae</taxon>
        <taxon>Salmonella</taxon>
    </lineage>
</organism>
<sequence>MESLTLQPIARVDGAINLPGSKSVSNRALLLAALACGKTVLTNLLDSDDVRHMLNALSALGINYTLSADRTRCDITGNGGPLRAPGALELFLGNAGTAMRPLAAALCLGQNEIVLTGEPRMKERPIGHLVDSLRQGGANIDYLEQENYPPLRLRGGFIGGDIEVDGSVSSQFLTALLMTAPLAPKDTIIRVKGELVSKPYIDITLNLMKTFGVEIANHHYQQFVVKGGQQYHSPGRYLVEGDASSASYFLAAGAIKGGTVKVTGIGRKSMQGDIRFADVLEKMGATITWGDDFIACTRGELHAIDMDMNHIPDAAMTIATTALFAKGTTTLRNIYNWRVKETDRLFAMATELRKVGAEVEEGHDYIRITPPAKLQHADIGTYNDHRMAMCFSLVALSDTPVTILDPKCTAKTFPDYFEQLARMSTPA</sequence>
<proteinExistence type="inferred from homology"/>
<keyword id="KW-0028">Amino-acid biosynthesis</keyword>
<keyword id="KW-0057">Aromatic amino acid biosynthesis</keyword>
<keyword id="KW-0963">Cytoplasm</keyword>
<keyword id="KW-0808">Transferase</keyword>
<dbReference type="EC" id="2.5.1.19" evidence="1"/>
<dbReference type="EMBL" id="AM933173">
    <property type="protein sequence ID" value="CAR36810.1"/>
    <property type="molecule type" value="Genomic_DNA"/>
</dbReference>
<dbReference type="RefSeq" id="WP_000445198.1">
    <property type="nucleotide sequence ID" value="NC_011274.1"/>
</dbReference>
<dbReference type="SMR" id="B5R8J5"/>
<dbReference type="KEGG" id="seg:SG0920"/>
<dbReference type="HOGENOM" id="CLU_024321_0_0_6"/>
<dbReference type="UniPathway" id="UPA00053">
    <property type="reaction ID" value="UER00089"/>
</dbReference>
<dbReference type="Proteomes" id="UP000008321">
    <property type="component" value="Chromosome"/>
</dbReference>
<dbReference type="GO" id="GO:0005737">
    <property type="term" value="C:cytoplasm"/>
    <property type="evidence" value="ECO:0007669"/>
    <property type="project" value="UniProtKB-SubCell"/>
</dbReference>
<dbReference type="GO" id="GO:0003866">
    <property type="term" value="F:3-phosphoshikimate 1-carboxyvinyltransferase activity"/>
    <property type="evidence" value="ECO:0007669"/>
    <property type="project" value="UniProtKB-UniRule"/>
</dbReference>
<dbReference type="GO" id="GO:0008652">
    <property type="term" value="P:amino acid biosynthetic process"/>
    <property type="evidence" value="ECO:0007669"/>
    <property type="project" value="UniProtKB-KW"/>
</dbReference>
<dbReference type="GO" id="GO:0009073">
    <property type="term" value="P:aromatic amino acid family biosynthetic process"/>
    <property type="evidence" value="ECO:0007669"/>
    <property type="project" value="UniProtKB-KW"/>
</dbReference>
<dbReference type="GO" id="GO:0009423">
    <property type="term" value="P:chorismate biosynthetic process"/>
    <property type="evidence" value="ECO:0007669"/>
    <property type="project" value="UniProtKB-UniRule"/>
</dbReference>
<dbReference type="FunFam" id="3.65.10.10:FF:000003">
    <property type="entry name" value="3-phosphoshikimate 1-carboxyvinyltransferase"/>
    <property type="match status" value="1"/>
</dbReference>
<dbReference type="FunFam" id="3.65.10.10:FF:000004">
    <property type="entry name" value="3-phosphoshikimate 1-carboxyvinyltransferase"/>
    <property type="match status" value="1"/>
</dbReference>
<dbReference type="Gene3D" id="3.65.10.10">
    <property type="entry name" value="Enolpyruvate transferase domain"/>
    <property type="match status" value="2"/>
</dbReference>
<dbReference type="HAMAP" id="MF_00210">
    <property type="entry name" value="EPSP_synth"/>
    <property type="match status" value="1"/>
</dbReference>
<dbReference type="InterPro" id="IPR001986">
    <property type="entry name" value="Enolpyruvate_Tfrase_dom"/>
</dbReference>
<dbReference type="InterPro" id="IPR036968">
    <property type="entry name" value="Enolpyruvate_Tfrase_sf"/>
</dbReference>
<dbReference type="InterPro" id="IPR006264">
    <property type="entry name" value="EPSP_synthase"/>
</dbReference>
<dbReference type="InterPro" id="IPR023193">
    <property type="entry name" value="EPSP_synthase_CS"/>
</dbReference>
<dbReference type="InterPro" id="IPR013792">
    <property type="entry name" value="RNA3'P_cycl/enolpyr_Trfase_a/b"/>
</dbReference>
<dbReference type="NCBIfam" id="TIGR01356">
    <property type="entry name" value="aroA"/>
    <property type="match status" value="1"/>
</dbReference>
<dbReference type="PANTHER" id="PTHR21090">
    <property type="entry name" value="AROM/DEHYDROQUINATE SYNTHASE"/>
    <property type="match status" value="1"/>
</dbReference>
<dbReference type="PANTHER" id="PTHR21090:SF5">
    <property type="entry name" value="PENTAFUNCTIONAL AROM POLYPEPTIDE"/>
    <property type="match status" value="1"/>
</dbReference>
<dbReference type="Pfam" id="PF00275">
    <property type="entry name" value="EPSP_synthase"/>
    <property type="match status" value="1"/>
</dbReference>
<dbReference type="PIRSF" id="PIRSF000505">
    <property type="entry name" value="EPSPS"/>
    <property type="match status" value="1"/>
</dbReference>
<dbReference type="SUPFAM" id="SSF55205">
    <property type="entry name" value="EPT/RTPC-like"/>
    <property type="match status" value="1"/>
</dbReference>
<dbReference type="PROSITE" id="PS00104">
    <property type="entry name" value="EPSP_SYNTHASE_1"/>
    <property type="match status" value="1"/>
</dbReference>
<dbReference type="PROSITE" id="PS00885">
    <property type="entry name" value="EPSP_SYNTHASE_2"/>
    <property type="match status" value="1"/>
</dbReference>
<feature type="chain" id="PRO_1000099747" description="3-phosphoshikimate 1-carboxyvinyltransferase">
    <location>
        <begin position="1"/>
        <end position="427"/>
    </location>
</feature>
<feature type="active site" description="Proton acceptor" evidence="1">
    <location>
        <position position="313"/>
    </location>
</feature>
<feature type="binding site" evidence="1">
    <location>
        <position position="22"/>
    </location>
    <ligand>
        <name>3-phosphoshikimate</name>
        <dbReference type="ChEBI" id="CHEBI:145989"/>
    </ligand>
</feature>
<feature type="binding site" evidence="1">
    <location>
        <position position="22"/>
    </location>
    <ligand>
        <name>phosphoenolpyruvate</name>
        <dbReference type="ChEBI" id="CHEBI:58702"/>
    </ligand>
</feature>
<feature type="binding site" evidence="1">
    <location>
        <position position="23"/>
    </location>
    <ligand>
        <name>3-phosphoshikimate</name>
        <dbReference type="ChEBI" id="CHEBI:145989"/>
    </ligand>
</feature>
<feature type="binding site" evidence="1">
    <location>
        <position position="27"/>
    </location>
    <ligand>
        <name>3-phosphoshikimate</name>
        <dbReference type="ChEBI" id="CHEBI:145989"/>
    </ligand>
</feature>
<feature type="binding site" evidence="1">
    <location>
        <position position="96"/>
    </location>
    <ligand>
        <name>phosphoenolpyruvate</name>
        <dbReference type="ChEBI" id="CHEBI:58702"/>
    </ligand>
</feature>
<feature type="binding site" evidence="1">
    <location>
        <position position="124"/>
    </location>
    <ligand>
        <name>phosphoenolpyruvate</name>
        <dbReference type="ChEBI" id="CHEBI:58702"/>
    </ligand>
</feature>
<feature type="binding site" evidence="1">
    <location>
        <position position="169"/>
    </location>
    <ligand>
        <name>3-phosphoshikimate</name>
        <dbReference type="ChEBI" id="CHEBI:145989"/>
    </ligand>
</feature>
<feature type="binding site" evidence="1">
    <location>
        <position position="170"/>
    </location>
    <ligand>
        <name>3-phosphoshikimate</name>
        <dbReference type="ChEBI" id="CHEBI:145989"/>
    </ligand>
</feature>
<feature type="binding site" evidence="1">
    <location>
        <position position="171"/>
    </location>
    <ligand>
        <name>3-phosphoshikimate</name>
        <dbReference type="ChEBI" id="CHEBI:145989"/>
    </ligand>
</feature>
<feature type="binding site" evidence="1">
    <location>
        <position position="171"/>
    </location>
    <ligand>
        <name>phosphoenolpyruvate</name>
        <dbReference type="ChEBI" id="CHEBI:58702"/>
    </ligand>
</feature>
<feature type="binding site" evidence="1">
    <location>
        <position position="197"/>
    </location>
    <ligand>
        <name>3-phosphoshikimate</name>
        <dbReference type="ChEBI" id="CHEBI:145989"/>
    </ligand>
</feature>
<feature type="binding site" evidence="1">
    <location>
        <position position="313"/>
    </location>
    <ligand>
        <name>3-phosphoshikimate</name>
        <dbReference type="ChEBI" id="CHEBI:145989"/>
    </ligand>
</feature>
<feature type="binding site" evidence="1">
    <location>
        <position position="336"/>
    </location>
    <ligand>
        <name>3-phosphoshikimate</name>
        <dbReference type="ChEBI" id="CHEBI:145989"/>
    </ligand>
</feature>
<feature type="binding site" evidence="1">
    <location>
        <position position="340"/>
    </location>
    <ligand>
        <name>3-phosphoshikimate</name>
        <dbReference type="ChEBI" id="CHEBI:145989"/>
    </ligand>
</feature>
<feature type="binding site" evidence="1">
    <location>
        <position position="344"/>
    </location>
    <ligand>
        <name>phosphoenolpyruvate</name>
        <dbReference type="ChEBI" id="CHEBI:58702"/>
    </ligand>
</feature>
<feature type="binding site" evidence="1">
    <location>
        <position position="386"/>
    </location>
    <ligand>
        <name>phosphoenolpyruvate</name>
        <dbReference type="ChEBI" id="CHEBI:58702"/>
    </ligand>
</feature>
<feature type="binding site" evidence="1">
    <location>
        <position position="411"/>
    </location>
    <ligand>
        <name>phosphoenolpyruvate</name>
        <dbReference type="ChEBI" id="CHEBI:58702"/>
    </ligand>
</feature>
<protein>
    <recommendedName>
        <fullName evidence="1">3-phosphoshikimate 1-carboxyvinyltransferase</fullName>
        <ecNumber evidence="1">2.5.1.19</ecNumber>
    </recommendedName>
    <alternativeName>
        <fullName evidence="1">5-enolpyruvylshikimate-3-phosphate synthase</fullName>
        <shortName evidence="1">EPSP synthase</shortName>
        <shortName evidence="1">EPSPS</shortName>
    </alternativeName>
</protein>
<evidence type="ECO:0000255" key="1">
    <source>
        <dbReference type="HAMAP-Rule" id="MF_00210"/>
    </source>
</evidence>
<gene>
    <name evidence="1" type="primary">aroA</name>
    <name type="ordered locus">SG0920</name>
</gene>
<reference key="1">
    <citation type="journal article" date="2008" name="Genome Res.">
        <title>Comparative genome analysis of Salmonella enteritidis PT4 and Salmonella gallinarum 287/91 provides insights into evolutionary and host adaptation pathways.</title>
        <authorList>
            <person name="Thomson N.R."/>
            <person name="Clayton D.J."/>
            <person name="Windhorst D."/>
            <person name="Vernikos G."/>
            <person name="Davidson S."/>
            <person name="Churcher C."/>
            <person name="Quail M.A."/>
            <person name="Stevens M."/>
            <person name="Jones M.A."/>
            <person name="Watson M."/>
            <person name="Barron A."/>
            <person name="Layton A."/>
            <person name="Pickard D."/>
            <person name="Kingsley R.A."/>
            <person name="Bignell A."/>
            <person name="Clark L."/>
            <person name="Harris B."/>
            <person name="Ormond D."/>
            <person name="Abdellah Z."/>
            <person name="Brooks K."/>
            <person name="Cherevach I."/>
            <person name="Chillingworth T."/>
            <person name="Woodward J."/>
            <person name="Norberczak H."/>
            <person name="Lord A."/>
            <person name="Arrowsmith C."/>
            <person name="Jagels K."/>
            <person name="Moule S."/>
            <person name="Mungall K."/>
            <person name="Saunders M."/>
            <person name="Whitehead S."/>
            <person name="Chabalgoity J.A."/>
            <person name="Maskell D."/>
            <person name="Humphreys T."/>
            <person name="Roberts M."/>
            <person name="Barrow P.A."/>
            <person name="Dougan G."/>
            <person name="Parkhill J."/>
        </authorList>
    </citation>
    <scope>NUCLEOTIDE SEQUENCE [LARGE SCALE GENOMIC DNA]</scope>
    <source>
        <strain>287/91 / NCTC 13346</strain>
    </source>
</reference>
<accession>B5R8J5</accession>